<comment type="function">
    <text>Inhibitor of subtilisin BPN' and trypsin.</text>
</comment>
<comment type="subunit">
    <text evidence="1">Homodimer.</text>
</comment>
<comment type="subcellular location">
    <subcellularLocation>
        <location>Secreted</location>
    </subcellularLocation>
</comment>
<comment type="similarity">
    <text evidence="2">Belongs to the protease inhibitor I16 (SSI) family.</text>
</comment>
<accession>P29609</accession>
<accession>Q9R5B7</accession>
<name>SSI4_STRLA</name>
<protein>
    <recommendedName>
        <fullName>Subtilisin inhibitor-like protein 4</fullName>
        <shortName>SIL-4</shortName>
        <shortName>SIL4</shortName>
    </recommendedName>
</protein>
<proteinExistence type="evidence at protein level"/>
<reference key="1">
    <citation type="journal article" date="1994" name="Eur. J. Biochem.">
        <title>Comparative studies on the primary structures and inhibitory properties of subtilisin-trypsin inhibitors from Streptomyces.</title>
        <authorList>
            <person name="Taguchi S."/>
            <person name="Kojima S."/>
            <person name="Terabe M."/>
            <person name="Miura K."/>
            <person name="Momose H."/>
        </authorList>
    </citation>
    <scope>PROTEIN SEQUENCE</scope>
    <source>
        <strain>DSM 40708 / ETH 18390 / KCC S985 / Tue 35</strain>
    </source>
</reference>
<reference key="2">
    <citation type="journal article" date="1992" name="FEMS Microbiol. Lett.">
        <title>Isolation and partial characterization of SSI-like protease inhibitors from Streptomyces.</title>
        <authorList>
            <person name="Taguchi S."/>
            <person name="Kojima S."/>
            <person name="Kumagai I."/>
            <person name="Ogawara H."/>
            <person name="Miura K."/>
            <person name="Momose H."/>
        </authorList>
    </citation>
    <scope>PROTEIN SEQUENCE OF 1-36</scope>
    <source>
        <strain>DSM 40708 / ETH 18390 / KCC S985 / Tue 35</strain>
    </source>
</reference>
<reference key="3">
    <citation type="journal article" date="1993" name="Biosci. Biotechnol. Biochem.">
        <title>High frequency of SSI-like protease inhibitors among Streptomyces.</title>
        <authorList>
            <person name="Taguchi S."/>
            <person name="Kikuchi H."/>
            <person name="Kojima S."/>
            <person name="Kumagai I."/>
            <person name="Nakase T."/>
            <person name="Miura K."/>
            <person name="Momose H."/>
        </authorList>
    </citation>
    <scope>PROTEIN SEQUENCE OF 1-43</scope>
    <source>
        <strain>DSM 40708 / ETH 18390 / KCC S985 / Tue 35</strain>
    </source>
</reference>
<feature type="chain" id="PRO_0000208664" description="Subtilisin inhibitor-like protein 4">
    <location>
        <begin position="1"/>
        <end position="116"/>
    </location>
</feature>
<feature type="site" description="Reactive bond" evidence="1">
    <location>
        <begin position="76"/>
        <end position="77"/>
    </location>
</feature>
<feature type="disulfide bond" evidence="1">
    <location>
        <begin position="38"/>
        <end position="53"/>
    </location>
</feature>
<feature type="disulfide bond" evidence="1">
    <location>
        <begin position="74"/>
        <end position="104"/>
    </location>
</feature>
<evidence type="ECO:0000250" key="1"/>
<evidence type="ECO:0000305" key="2"/>
<sequence>APDAAPASLYAPSALVLTIGHGGAAATATPERAVTLTCAPTSSGTHPAASAACAELRGVGGDFAALKARDDVWCNKLYDPVVVTAQGVWQGQRVSYERTFGNSCERDAVGGSLFAF</sequence>
<dbReference type="PIR" id="S42573">
    <property type="entry name" value="PC1268"/>
</dbReference>
<dbReference type="SMR" id="P29609"/>
<dbReference type="MEROPS" id="I16.009"/>
<dbReference type="GO" id="GO:0005576">
    <property type="term" value="C:extracellular region"/>
    <property type="evidence" value="ECO:0007669"/>
    <property type="project" value="UniProtKB-SubCell"/>
</dbReference>
<dbReference type="GO" id="GO:0004867">
    <property type="term" value="F:serine-type endopeptidase inhibitor activity"/>
    <property type="evidence" value="ECO:0007669"/>
    <property type="project" value="UniProtKB-UniRule"/>
</dbReference>
<dbReference type="Gene3D" id="3.30.350.10">
    <property type="entry name" value="Subtilisin inhibitor-like"/>
    <property type="match status" value="1"/>
</dbReference>
<dbReference type="HAMAP" id="MF_00778">
    <property type="entry name" value="SSI"/>
    <property type="match status" value="1"/>
</dbReference>
<dbReference type="InterPro" id="IPR000691">
    <property type="entry name" value="Prot_inh_I16_SSI"/>
</dbReference>
<dbReference type="InterPro" id="IPR020054">
    <property type="entry name" value="Prot_inh_SSI_I16_CS"/>
</dbReference>
<dbReference type="InterPro" id="IPR023549">
    <property type="entry name" value="Subtilisin_inhibitor"/>
</dbReference>
<dbReference type="InterPro" id="IPR036819">
    <property type="entry name" value="Subtilisin_inhibitor-like_sf"/>
</dbReference>
<dbReference type="Pfam" id="PF00720">
    <property type="entry name" value="SSI"/>
    <property type="match status" value="1"/>
</dbReference>
<dbReference type="PRINTS" id="PR00294">
    <property type="entry name" value="SSBTLNINHBTR"/>
</dbReference>
<dbReference type="SUPFAM" id="SSF55399">
    <property type="entry name" value="Subtilisin inhibitor"/>
    <property type="match status" value="1"/>
</dbReference>
<dbReference type="PROSITE" id="PS00999">
    <property type="entry name" value="SSI"/>
    <property type="match status" value="1"/>
</dbReference>
<keyword id="KW-0903">Direct protein sequencing</keyword>
<keyword id="KW-1015">Disulfide bond</keyword>
<keyword id="KW-0646">Protease inhibitor</keyword>
<keyword id="KW-0964">Secreted</keyword>
<keyword id="KW-0722">Serine protease inhibitor</keyword>
<organism>
    <name type="scientific">Streptomyces lavendulae</name>
    <dbReference type="NCBI Taxonomy" id="1914"/>
    <lineage>
        <taxon>Bacteria</taxon>
        <taxon>Bacillati</taxon>
        <taxon>Actinomycetota</taxon>
        <taxon>Actinomycetes</taxon>
        <taxon>Kitasatosporales</taxon>
        <taxon>Streptomycetaceae</taxon>
        <taxon>Streptomyces</taxon>
    </lineage>
</organism>